<protein>
    <recommendedName>
        <fullName evidence="1">dTTP/UTP pyrophosphatase</fullName>
        <shortName evidence="1">dTTPase/UTPase</shortName>
        <ecNumber evidence="1">3.6.1.9</ecNumber>
    </recommendedName>
    <alternativeName>
        <fullName evidence="1">Nucleoside triphosphate pyrophosphatase</fullName>
    </alternativeName>
    <alternativeName>
        <fullName evidence="1">Nucleotide pyrophosphatase</fullName>
        <shortName evidence="1">Nucleotide PPase</shortName>
    </alternativeName>
</protein>
<proteinExistence type="inferred from homology"/>
<reference key="1">
    <citation type="submission" date="2007-02" db="EMBL/GenBank/DDBJ databases">
        <title>Complete sequence of Clostridium thermocellum ATCC 27405.</title>
        <authorList>
            <consortium name="US DOE Joint Genome Institute"/>
            <person name="Copeland A."/>
            <person name="Lucas S."/>
            <person name="Lapidus A."/>
            <person name="Barry K."/>
            <person name="Detter J.C."/>
            <person name="Glavina del Rio T."/>
            <person name="Hammon N."/>
            <person name="Israni S."/>
            <person name="Dalin E."/>
            <person name="Tice H."/>
            <person name="Pitluck S."/>
            <person name="Chertkov O."/>
            <person name="Brettin T."/>
            <person name="Bruce D."/>
            <person name="Han C."/>
            <person name="Tapia R."/>
            <person name="Gilna P."/>
            <person name="Schmutz J."/>
            <person name="Larimer F."/>
            <person name="Land M."/>
            <person name="Hauser L."/>
            <person name="Kyrpides N."/>
            <person name="Mikhailova N."/>
            <person name="Wu J.H.D."/>
            <person name="Newcomb M."/>
            <person name="Richardson P."/>
        </authorList>
    </citation>
    <scope>NUCLEOTIDE SEQUENCE [LARGE SCALE GENOMIC DNA]</scope>
    <source>
        <strain>ATCC 27405 / DSM 1237 / JCM 9322 / NBRC 103400 / NCIMB 10682 / NRRL B-4536 / VPI 7372</strain>
    </source>
</reference>
<dbReference type="EC" id="3.6.1.9" evidence="1"/>
<dbReference type="EMBL" id="CP000568">
    <property type="protein sequence ID" value="ABN51328.1"/>
    <property type="molecule type" value="Genomic_DNA"/>
</dbReference>
<dbReference type="RefSeq" id="WP_003512062.1">
    <property type="nucleotide sequence ID" value="NC_009012.1"/>
</dbReference>
<dbReference type="SMR" id="A3DBJ9"/>
<dbReference type="STRING" id="203119.Cthe_0087"/>
<dbReference type="GeneID" id="35803081"/>
<dbReference type="KEGG" id="cth:Cthe_0087"/>
<dbReference type="eggNOG" id="COG0424">
    <property type="taxonomic scope" value="Bacteria"/>
</dbReference>
<dbReference type="HOGENOM" id="CLU_040416_0_0_9"/>
<dbReference type="OrthoDB" id="9807767at2"/>
<dbReference type="Proteomes" id="UP000002145">
    <property type="component" value="Chromosome"/>
</dbReference>
<dbReference type="GO" id="GO:0005737">
    <property type="term" value="C:cytoplasm"/>
    <property type="evidence" value="ECO:0007669"/>
    <property type="project" value="UniProtKB-SubCell"/>
</dbReference>
<dbReference type="GO" id="GO:0036218">
    <property type="term" value="F:dTTP diphosphatase activity"/>
    <property type="evidence" value="ECO:0007669"/>
    <property type="project" value="RHEA"/>
</dbReference>
<dbReference type="GO" id="GO:0036221">
    <property type="term" value="F:UTP diphosphatase activity"/>
    <property type="evidence" value="ECO:0007669"/>
    <property type="project" value="RHEA"/>
</dbReference>
<dbReference type="GO" id="GO:0009117">
    <property type="term" value="P:nucleotide metabolic process"/>
    <property type="evidence" value="ECO:0007669"/>
    <property type="project" value="UniProtKB-KW"/>
</dbReference>
<dbReference type="CDD" id="cd00555">
    <property type="entry name" value="Maf"/>
    <property type="match status" value="1"/>
</dbReference>
<dbReference type="FunFam" id="3.90.950.10:FF:000005">
    <property type="entry name" value="7-methyl-GTP pyrophosphatase"/>
    <property type="match status" value="1"/>
</dbReference>
<dbReference type="Gene3D" id="3.90.950.10">
    <property type="match status" value="1"/>
</dbReference>
<dbReference type="HAMAP" id="MF_00528">
    <property type="entry name" value="Maf"/>
    <property type="match status" value="1"/>
</dbReference>
<dbReference type="InterPro" id="IPR029001">
    <property type="entry name" value="ITPase-like_fam"/>
</dbReference>
<dbReference type="InterPro" id="IPR003697">
    <property type="entry name" value="Maf-like"/>
</dbReference>
<dbReference type="NCBIfam" id="TIGR00172">
    <property type="entry name" value="maf"/>
    <property type="match status" value="1"/>
</dbReference>
<dbReference type="PANTHER" id="PTHR43213">
    <property type="entry name" value="BIFUNCTIONAL DTTP/UTP PYROPHOSPHATASE/METHYLTRANSFERASE PROTEIN-RELATED"/>
    <property type="match status" value="1"/>
</dbReference>
<dbReference type="PANTHER" id="PTHR43213:SF5">
    <property type="entry name" value="BIFUNCTIONAL DTTP_UTP PYROPHOSPHATASE_METHYLTRANSFERASE PROTEIN-RELATED"/>
    <property type="match status" value="1"/>
</dbReference>
<dbReference type="Pfam" id="PF02545">
    <property type="entry name" value="Maf"/>
    <property type="match status" value="1"/>
</dbReference>
<dbReference type="PIRSF" id="PIRSF006305">
    <property type="entry name" value="Maf"/>
    <property type="match status" value="1"/>
</dbReference>
<dbReference type="SUPFAM" id="SSF52972">
    <property type="entry name" value="ITPase-like"/>
    <property type="match status" value="1"/>
</dbReference>
<name>NTPPA_ACET2</name>
<feature type="chain" id="PRO_1000081714" description="dTTP/UTP pyrophosphatase">
    <location>
        <begin position="1"/>
        <end position="200"/>
    </location>
</feature>
<feature type="active site" description="Proton acceptor" evidence="1">
    <location>
        <position position="76"/>
    </location>
</feature>
<feature type="site" description="Important for substrate specificity" evidence="1">
    <location>
        <position position="12"/>
    </location>
</feature>
<feature type="site" description="Important for substrate specificity" evidence="1">
    <location>
        <position position="77"/>
    </location>
</feature>
<feature type="site" description="Important for substrate specificity" evidence="1">
    <location>
        <position position="160"/>
    </location>
</feature>
<organism>
    <name type="scientific">Acetivibrio thermocellus (strain ATCC 27405 / DSM 1237 / JCM 9322 / NBRC 103400 / NCIMB 10682 / NRRL B-4536 / VPI 7372)</name>
    <name type="common">Clostridium thermocellum</name>
    <dbReference type="NCBI Taxonomy" id="203119"/>
    <lineage>
        <taxon>Bacteria</taxon>
        <taxon>Bacillati</taxon>
        <taxon>Bacillota</taxon>
        <taxon>Clostridia</taxon>
        <taxon>Eubacteriales</taxon>
        <taxon>Oscillospiraceae</taxon>
        <taxon>Acetivibrio</taxon>
    </lineage>
</organism>
<evidence type="ECO:0000255" key="1">
    <source>
        <dbReference type="HAMAP-Rule" id="MF_00528"/>
    </source>
</evidence>
<sequence length="200" mass="22324">MVKIVLASGSPRRSELLKQIGLDFEIVLSDIDESNEENLKANELVQHLAYKKAYDVAKKVANRENGKERYLVVGADTVVVKDRIMGKPKDRDDAVRMLKHLSGSWHEVMTGIALIDTKDFRSVTSVEITKVKMKELTDDTILAYVDTKEPMDKAGAYGIQEKGAILVERIEGCYFNVVGLPLGRLSDLLKDFGVSVLKKI</sequence>
<comment type="function">
    <text evidence="1">Nucleoside triphosphate pyrophosphatase that hydrolyzes dTTP and UTP. May have a dual role in cell division arrest and in preventing the incorporation of modified nucleotides into cellular nucleic acids.</text>
</comment>
<comment type="catalytic activity">
    <reaction evidence="1">
        <text>dTTP + H2O = dTMP + diphosphate + H(+)</text>
        <dbReference type="Rhea" id="RHEA:28534"/>
        <dbReference type="ChEBI" id="CHEBI:15377"/>
        <dbReference type="ChEBI" id="CHEBI:15378"/>
        <dbReference type="ChEBI" id="CHEBI:33019"/>
        <dbReference type="ChEBI" id="CHEBI:37568"/>
        <dbReference type="ChEBI" id="CHEBI:63528"/>
        <dbReference type="EC" id="3.6.1.9"/>
    </reaction>
</comment>
<comment type="catalytic activity">
    <reaction evidence="1">
        <text>UTP + H2O = UMP + diphosphate + H(+)</text>
        <dbReference type="Rhea" id="RHEA:29395"/>
        <dbReference type="ChEBI" id="CHEBI:15377"/>
        <dbReference type="ChEBI" id="CHEBI:15378"/>
        <dbReference type="ChEBI" id="CHEBI:33019"/>
        <dbReference type="ChEBI" id="CHEBI:46398"/>
        <dbReference type="ChEBI" id="CHEBI:57865"/>
        <dbReference type="EC" id="3.6.1.9"/>
    </reaction>
</comment>
<comment type="cofactor">
    <cofactor evidence="1">
        <name>a divalent metal cation</name>
        <dbReference type="ChEBI" id="CHEBI:60240"/>
    </cofactor>
</comment>
<comment type="subcellular location">
    <subcellularLocation>
        <location evidence="1">Cytoplasm</location>
    </subcellularLocation>
</comment>
<comment type="similarity">
    <text evidence="1">Belongs to the Maf family. YhdE subfamily.</text>
</comment>
<accession>A3DBJ9</accession>
<keyword id="KW-0963">Cytoplasm</keyword>
<keyword id="KW-0378">Hydrolase</keyword>
<keyword id="KW-0546">Nucleotide metabolism</keyword>
<keyword id="KW-1185">Reference proteome</keyword>
<gene>
    <name type="ordered locus">Cthe_0087</name>
</gene>